<sequence length="155" mass="17507">MPKQNKYKGVSVDYRYGDESVARFINAVMLDGKKDVATRIVYDAFTIIAEKMNGESPLEVYRKAMSNIAPVVEVRSKRVGGATYQIPMEVKPSRRGALAFRWLKLYAKRRGGRSMAEKLAAELMDAANEQGASVKKRDEVHRMADANKAFAHFRF</sequence>
<dbReference type="EMBL" id="CP000492">
    <property type="protein sequence ID" value="ABL66415.1"/>
    <property type="molecule type" value="Genomic_DNA"/>
</dbReference>
<dbReference type="RefSeq" id="WP_011746197.1">
    <property type="nucleotide sequence ID" value="NC_008639.1"/>
</dbReference>
<dbReference type="SMR" id="A1BJ38"/>
<dbReference type="STRING" id="290317.Cpha266_2427"/>
<dbReference type="KEGG" id="cph:Cpha266_2427"/>
<dbReference type="eggNOG" id="COG0049">
    <property type="taxonomic scope" value="Bacteria"/>
</dbReference>
<dbReference type="HOGENOM" id="CLU_072226_1_1_10"/>
<dbReference type="OrthoDB" id="9807653at2"/>
<dbReference type="Proteomes" id="UP000008701">
    <property type="component" value="Chromosome"/>
</dbReference>
<dbReference type="GO" id="GO:0015935">
    <property type="term" value="C:small ribosomal subunit"/>
    <property type="evidence" value="ECO:0007669"/>
    <property type="project" value="InterPro"/>
</dbReference>
<dbReference type="GO" id="GO:0019843">
    <property type="term" value="F:rRNA binding"/>
    <property type="evidence" value="ECO:0007669"/>
    <property type="project" value="UniProtKB-UniRule"/>
</dbReference>
<dbReference type="GO" id="GO:0003735">
    <property type="term" value="F:structural constituent of ribosome"/>
    <property type="evidence" value="ECO:0007669"/>
    <property type="project" value="InterPro"/>
</dbReference>
<dbReference type="GO" id="GO:0000049">
    <property type="term" value="F:tRNA binding"/>
    <property type="evidence" value="ECO:0007669"/>
    <property type="project" value="UniProtKB-UniRule"/>
</dbReference>
<dbReference type="GO" id="GO:0006412">
    <property type="term" value="P:translation"/>
    <property type="evidence" value="ECO:0007669"/>
    <property type="project" value="UniProtKB-UniRule"/>
</dbReference>
<dbReference type="CDD" id="cd14869">
    <property type="entry name" value="uS7_Bacteria"/>
    <property type="match status" value="1"/>
</dbReference>
<dbReference type="FunFam" id="1.10.455.10:FF:000001">
    <property type="entry name" value="30S ribosomal protein S7"/>
    <property type="match status" value="1"/>
</dbReference>
<dbReference type="Gene3D" id="1.10.455.10">
    <property type="entry name" value="Ribosomal protein S7 domain"/>
    <property type="match status" value="1"/>
</dbReference>
<dbReference type="HAMAP" id="MF_00480_B">
    <property type="entry name" value="Ribosomal_uS7_B"/>
    <property type="match status" value="1"/>
</dbReference>
<dbReference type="InterPro" id="IPR000235">
    <property type="entry name" value="Ribosomal_uS7"/>
</dbReference>
<dbReference type="InterPro" id="IPR005717">
    <property type="entry name" value="Ribosomal_uS7_bac/org-type"/>
</dbReference>
<dbReference type="InterPro" id="IPR023798">
    <property type="entry name" value="Ribosomal_uS7_dom"/>
</dbReference>
<dbReference type="InterPro" id="IPR036823">
    <property type="entry name" value="Ribosomal_uS7_dom_sf"/>
</dbReference>
<dbReference type="NCBIfam" id="TIGR01029">
    <property type="entry name" value="rpsG_bact"/>
    <property type="match status" value="1"/>
</dbReference>
<dbReference type="PANTHER" id="PTHR11205">
    <property type="entry name" value="RIBOSOMAL PROTEIN S7"/>
    <property type="match status" value="1"/>
</dbReference>
<dbReference type="Pfam" id="PF00177">
    <property type="entry name" value="Ribosomal_S7"/>
    <property type="match status" value="1"/>
</dbReference>
<dbReference type="PIRSF" id="PIRSF002122">
    <property type="entry name" value="RPS7p_RPS7a_RPS5e_RPS7o"/>
    <property type="match status" value="1"/>
</dbReference>
<dbReference type="SUPFAM" id="SSF47973">
    <property type="entry name" value="Ribosomal protein S7"/>
    <property type="match status" value="1"/>
</dbReference>
<protein>
    <recommendedName>
        <fullName evidence="1">Small ribosomal subunit protein uS7</fullName>
    </recommendedName>
    <alternativeName>
        <fullName evidence="2">30S ribosomal protein S7</fullName>
    </alternativeName>
</protein>
<comment type="function">
    <text evidence="1">One of the primary rRNA binding proteins, it binds directly to 16S rRNA where it nucleates assembly of the head domain of the 30S subunit. Is located at the subunit interface close to the decoding center, probably blocks exit of the E-site tRNA.</text>
</comment>
<comment type="subunit">
    <text evidence="1">Part of the 30S ribosomal subunit. Contacts proteins S9 and S11.</text>
</comment>
<comment type="similarity">
    <text evidence="1">Belongs to the universal ribosomal protein uS7 family.</text>
</comment>
<evidence type="ECO:0000255" key="1">
    <source>
        <dbReference type="HAMAP-Rule" id="MF_00480"/>
    </source>
</evidence>
<evidence type="ECO:0000305" key="2"/>
<gene>
    <name evidence="1" type="primary">rpsG</name>
    <name type="ordered locus">Cpha266_2427</name>
</gene>
<feature type="chain" id="PRO_0000344288" description="Small ribosomal subunit protein uS7">
    <location>
        <begin position="1"/>
        <end position="155"/>
    </location>
</feature>
<name>RS7_CHLPD</name>
<organism>
    <name type="scientific">Chlorobium phaeobacteroides (strain DSM 266 / SMG 266 / 2430)</name>
    <dbReference type="NCBI Taxonomy" id="290317"/>
    <lineage>
        <taxon>Bacteria</taxon>
        <taxon>Pseudomonadati</taxon>
        <taxon>Chlorobiota</taxon>
        <taxon>Chlorobiia</taxon>
        <taxon>Chlorobiales</taxon>
        <taxon>Chlorobiaceae</taxon>
        <taxon>Chlorobium/Pelodictyon group</taxon>
        <taxon>Chlorobium</taxon>
    </lineage>
</organism>
<keyword id="KW-1185">Reference proteome</keyword>
<keyword id="KW-0687">Ribonucleoprotein</keyword>
<keyword id="KW-0689">Ribosomal protein</keyword>
<keyword id="KW-0694">RNA-binding</keyword>
<keyword id="KW-0699">rRNA-binding</keyword>
<keyword id="KW-0820">tRNA-binding</keyword>
<reference key="1">
    <citation type="submission" date="2006-12" db="EMBL/GenBank/DDBJ databases">
        <title>Complete sequence of Chlorobium phaeobacteroides DSM 266.</title>
        <authorList>
            <consortium name="US DOE Joint Genome Institute"/>
            <person name="Copeland A."/>
            <person name="Lucas S."/>
            <person name="Lapidus A."/>
            <person name="Barry K."/>
            <person name="Detter J.C."/>
            <person name="Glavina del Rio T."/>
            <person name="Hammon N."/>
            <person name="Israni S."/>
            <person name="Pitluck S."/>
            <person name="Goltsman E."/>
            <person name="Schmutz J."/>
            <person name="Larimer F."/>
            <person name="Land M."/>
            <person name="Hauser L."/>
            <person name="Mikhailova N."/>
            <person name="Li T."/>
            <person name="Overmann J."/>
            <person name="Bryant D.A."/>
            <person name="Richardson P."/>
        </authorList>
    </citation>
    <scope>NUCLEOTIDE SEQUENCE [LARGE SCALE GENOMIC DNA]</scope>
    <source>
        <strain>DSM 266 / SMG 266 / 2430</strain>
    </source>
</reference>
<proteinExistence type="inferred from homology"/>
<accession>A1BJ38</accession>